<name>RL10_STAA8</name>
<evidence type="ECO:0000255" key="1">
    <source>
        <dbReference type="HAMAP-Rule" id="MF_00362"/>
    </source>
</evidence>
<evidence type="ECO:0000305" key="2"/>
<keyword id="KW-1185">Reference proteome</keyword>
<keyword id="KW-0687">Ribonucleoprotein</keyword>
<keyword id="KW-0689">Ribosomal protein</keyword>
<keyword id="KW-0694">RNA-binding</keyword>
<keyword id="KW-0699">rRNA-binding</keyword>
<accession>Q2G0N9</accession>
<sequence>MSAIIEAKKQLVDEIAEVLSNSVSTVIVDYRGLTVAEVTDLRSQLREAGVEYKVYKNTMVRRAAEKAGIEGLDEFLTGPTAIATSSEDAVAAAKVISGFAKDHEALEIKSGVMEGNVITAEEVKTVGSLPSHDGLVSMLLSVLQAPVRNFAYAVKAIGEQKEENAE</sequence>
<protein>
    <recommendedName>
        <fullName evidence="1">Large ribosomal subunit protein uL10</fullName>
    </recommendedName>
    <alternativeName>
        <fullName evidence="2">50S ribosomal protein L10</fullName>
    </alternativeName>
</protein>
<gene>
    <name evidence="1" type="primary">rplJ</name>
    <name type="ordered locus">SAOUHSC_00520</name>
</gene>
<organism>
    <name type="scientific">Staphylococcus aureus (strain NCTC 8325 / PS 47)</name>
    <dbReference type="NCBI Taxonomy" id="93061"/>
    <lineage>
        <taxon>Bacteria</taxon>
        <taxon>Bacillati</taxon>
        <taxon>Bacillota</taxon>
        <taxon>Bacilli</taxon>
        <taxon>Bacillales</taxon>
        <taxon>Staphylococcaceae</taxon>
        <taxon>Staphylococcus</taxon>
    </lineage>
</organism>
<feature type="chain" id="PRO_1000005603" description="Large ribosomal subunit protein uL10">
    <location>
        <begin position="1"/>
        <end position="166"/>
    </location>
</feature>
<proteinExistence type="inferred from homology"/>
<comment type="function">
    <text evidence="1">Forms part of the ribosomal stalk, playing a central role in the interaction of the ribosome with GTP-bound translation factors.</text>
</comment>
<comment type="subunit">
    <text evidence="1">Part of the ribosomal stalk of the 50S ribosomal subunit. The N-terminus interacts with L11 and the large rRNA to form the base of the stalk. The C-terminus forms an elongated spine to which L12 dimers bind in a sequential fashion forming a multimeric L10(L12)X complex.</text>
</comment>
<comment type="similarity">
    <text evidence="1">Belongs to the universal ribosomal protein uL10 family.</text>
</comment>
<reference key="1">
    <citation type="book" date="2006" name="Gram positive pathogens, 2nd edition">
        <title>The Staphylococcus aureus NCTC 8325 genome.</title>
        <editorList>
            <person name="Fischetti V."/>
            <person name="Novick R."/>
            <person name="Ferretti J."/>
            <person name="Portnoy D."/>
            <person name="Rood J."/>
        </editorList>
        <authorList>
            <person name="Gillaspy A.F."/>
            <person name="Worrell V."/>
            <person name="Orvis J."/>
            <person name="Roe B.A."/>
            <person name="Dyer D.W."/>
            <person name="Iandolo J.J."/>
        </authorList>
    </citation>
    <scope>NUCLEOTIDE SEQUENCE [LARGE SCALE GENOMIC DNA]</scope>
    <source>
        <strain>NCTC 8325 / PS 47</strain>
    </source>
</reference>
<dbReference type="EMBL" id="CP000253">
    <property type="protein sequence ID" value="ABD29669.1"/>
    <property type="molecule type" value="Genomic_DNA"/>
</dbReference>
<dbReference type="RefSeq" id="WP_001273085.1">
    <property type="nucleotide sequence ID" value="NZ_LS483365.1"/>
</dbReference>
<dbReference type="RefSeq" id="YP_499093.1">
    <property type="nucleotide sequence ID" value="NC_007795.1"/>
</dbReference>
<dbReference type="SMR" id="Q2G0N9"/>
<dbReference type="STRING" id="93061.SAOUHSC_00520"/>
<dbReference type="PaxDb" id="1280-SAXN108_0593"/>
<dbReference type="GeneID" id="3920374"/>
<dbReference type="KEGG" id="sao:SAOUHSC_00520"/>
<dbReference type="PATRIC" id="fig|93061.5.peg.467"/>
<dbReference type="eggNOG" id="COG0244">
    <property type="taxonomic scope" value="Bacteria"/>
</dbReference>
<dbReference type="HOGENOM" id="CLU_092227_2_0_9"/>
<dbReference type="OrthoDB" id="9808307at2"/>
<dbReference type="PRO" id="PR:Q2G0N9"/>
<dbReference type="Proteomes" id="UP000008816">
    <property type="component" value="Chromosome"/>
</dbReference>
<dbReference type="GO" id="GO:0022625">
    <property type="term" value="C:cytosolic large ribosomal subunit"/>
    <property type="evidence" value="ECO:0000318"/>
    <property type="project" value="GO_Central"/>
</dbReference>
<dbReference type="GO" id="GO:0070180">
    <property type="term" value="F:large ribosomal subunit rRNA binding"/>
    <property type="evidence" value="ECO:0007669"/>
    <property type="project" value="UniProtKB-UniRule"/>
</dbReference>
<dbReference type="GO" id="GO:0003735">
    <property type="term" value="F:structural constituent of ribosome"/>
    <property type="evidence" value="ECO:0000318"/>
    <property type="project" value="GO_Central"/>
</dbReference>
<dbReference type="GO" id="GO:0006412">
    <property type="term" value="P:translation"/>
    <property type="evidence" value="ECO:0000318"/>
    <property type="project" value="GO_Central"/>
</dbReference>
<dbReference type="CDD" id="cd05797">
    <property type="entry name" value="Ribosomal_L10"/>
    <property type="match status" value="1"/>
</dbReference>
<dbReference type="FunFam" id="3.30.70.1730:FF:000001">
    <property type="entry name" value="50S ribosomal protein L10"/>
    <property type="match status" value="1"/>
</dbReference>
<dbReference type="Gene3D" id="3.30.70.1730">
    <property type="match status" value="1"/>
</dbReference>
<dbReference type="Gene3D" id="6.10.250.290">
    <property type="match status" value="1"/>
</dbReference>
<dbReference type="HAMAP" id="MF_00362">
    <property type="entry name" value="Ribosomal_uL10"/>
    <property type="match status" value="1"/>
</dbReference>
<dbReference type="InterPro" id="IPR001790">
    <property type="entry name" value="Ribosomal_uL10"/>
</dbReference>
<dbReference type="InterPro" id="IPR043141">
    <property type="entry name" value="Ribosomal_uL10-like_sf"/>
</dbReference>
<dbReference type="InterPro" id="IPR022973">
    <property type="entry name" value="Ribosomal_uL10_bac"/>
</dbReference>
<dbReference type="InterPro" id="IPR047865">
    <property type="entry name" value="Ribosomal_uL10_bac_type"/>
</dbReference>
<dbReference type="InterPro" id="IPR002363">
    <property type="entry name" value="Ribosomal_uL10_CS_bac"/>
</dbReference>
<dbReference type="NCBIfam" id="NF000955">
    <property type="entry name" value="PRK00099.1-1"/>
    <property type="match status" value="1"/>
</dbReference>
<dbReference type="PANTHER" id="PTHR11560">
    <property type="entry name" value="39S RIBOSOMAL PROTEIN L10, MITOCHONDRIAL"/>
    <property type="match status" value="1"/>
</dbReference>
<dbReference type="Pfam" id="PF00466">
    <property type="entry name" value="Ribosomal_L10"/>
    <property type="match status" value="1"/>
</dbReference>
<dbReference type="SUPFAM" id="SSF160369">
    <property type="entry name" value="Ribosomal protein L10-like"/>
    <property type="match status" value="1"/>
</dbReference>
<dbReference type="PROSITE" id="PS01109">
    <property type="entry name" value="RIBOSOMAL_L10"/>
    <property type="match status" value="1"/>
</dbReference>